<comment type="function">
    <text evidence="1">Can catalyze the hydrolysis of ATP in the presence of single-stranded DNA, the ATP-dependent uptake of single-stranded DNA by duplex DNA, and the ATP-dependent hybridization of homologous single-stranded DNAs. It interacts with LexA causing its activation and leading to its autocatalytic cleavage.</text>
</comment>
<comment type="subcellular location">
    <subcellularLocation>
        <location evidence="1">Cytoplasm</location>
    </subcellularLocation>
</comment>
<comment type="similarity">
    <text evidence="1">Belongs to the RecA family.</text>
</comment>
<sequence>MAKKPKKLEEISKKFGAEREKALNDALKLIEKDFGKGSIMRLGERAEQKVQVMSSGSLALDIALGSGGYPKGRIIEIYGPESSGKTTVALHAVAQAQKEGGIAAFIDAEHALDPAYAAALGVNIDELLLSQPDSGEQGLEIAGKLIDSGAVDLVVVDSVAALVPRAEIDGDIGDSHVGLQARMMSQAMRKLGASINKTKTIAIFINQLREKVGVMFGNPETTPGGRALKFYASVRLDVRGNTQIKGTGDQKETNVGKETKIKVVKNKVAPPFKEAVVEIMYGEGISKTGELLKIASDLDIIKKAGAWYSYKDEKIGQGSENAKKYLAEHPEIFDEIDKQVRSKFGLIDGEEVSEQDTENKKDEPKKEEAVNEEVPLDLGDELEIEIEE</sequence>
<keyword id="KW-0067">ATP-binding</keyword>
<keyword id="KW-0963">Cytoplasm</keyword>
<keyword id="KW-0227">DNA damage</keyword>
<keyword id="KW-0233">DNA recombination</keyword>
<keyword id="KW-0234">DNA repair</keyword>
<keyword id="KW-0238">DNA-binding</keyword>
<keyword id="KW-0547">Nucleotide-binding</keyword>
<keyword id="KW-0742">SOS response</keyword>
<proteinExistence type="inferred from homology"/>
<gene>
    <name evidence="1" type="primary">recA</name>
    <name type="ordered locus">SPH_2089</name>
</gene>
<name>RECA_STRPI</name>
<organism>
    <name type="scientific">Streptococcus pneumoniae (strain Hungary19A-6)</name>
    <dbReference type="NCBI Taxonomy" id="487214"/>
    <lineage>
        <taxon>Bacteria</taxon>
        <taxon>Bacillati</taxon>
        <taxon>Bacillota</taxon>
        <taxon>Bacilli</taxon>
        <taxon>Lactobacillales</taxon>
        <taxon>Streptococcaceae</taxon>
        <taxon>Streptococcus</taxon>
    </lineage>
</organism>
<feature type="chain" id="PRO_1000114374" description="Protein RecA">
    <location>
        <begin position="1"/>
        <end position="388"/>
    </location>
</feature>
<feature type="region of interest" description="Disordered" evidence="2">
    <location>
        <begin position="347"/>
        <end position="388"/>
    </location>
</feature>
<feature type="compositionally biased region" description="Basic and acidic residues" evidence="2">
    <location>
        <begin position="357"/>
        <end position="369"/>
    </location>
</feature>
<feature type="compositionally biased region" description="Acidic residues" evidence="2">
    <location>
        <begin position="370"/>
        <end position="388"/>
    </location>
</feature>
<feature type="binding site" evidence="1">
    <location>
        <begin position="79"/>
        <end position="86"/>
    </location>
    <ligand>
        <name>ATP</name>
        <dbReference type="ChEBI" id="CHEBI:30616"/>
    </ligand>
</feature>
<protein>
    <recommendedName>
        <fullName evidence="1">Protein RecA</fullName>
    </recommendedName>
    <alternativeName>
        <fullName evidence="1">Recombinase A</fullName>
    </alternativeName>
</protein>
<evidence type="ECO:0000255" key="1">
    <source>
        <dbReference type="HAMAP-Rule" id="MF_00268"/>
    </source>
</evidence>
<evidence type="ECO:0000256" key="2">
    <source>
        <dbReference type="SAM" id="MobiDB-lite"/>
    </source>
</evidence>
<dbReference type="EMBL" id="CP000936">
    <property type="protein sequence ID" value="ACA36924.1"/>
    <property type="molecule type" value="Genomic_DNA"/>
</dbReference>
<dbReference type="RefSeq" id="WP_001085462.1">
    <property type="nucleotide sequence ID" value="NC_010380.1"/>
</dbReference>
<dbReference type="SMR" id="B1I8Q1"/>
<dbReference type="GeneID" id="45652840"/>
<dbReference type="KEGG" id="spv:SPH_2089"/>
<dbReference type="HOGENOM" id="CLU_040469_3_2_9"/>
<dbReference type="Proteomes" id="UP000002163">
    <property type="component" value="Chromosome"/>
</dbReference>
<dbReference type="GO" id="GO:0005829">
    <property type="term" value="C:cytosol"/>
    <property type="evidence" value="ECO:0007669"/>
    <property type="project" value="TreeGrafter"/>
</dbReference>
<dbReference type="GO" id="GO:0005524">
    <property type="term" value="F:ATP binding"/>
    <property type="evidence" value="ECO:0007669"/>
    <property type="project" value="UniProtKB-UniRule"/>
</dbReference>
<dbReference type="GO" id="GO:0016887">
    <property type="term" value="F:ATP hydrolysis activity"/>
    <property type="evidence" value="ECO:0007669"/>
    <property type="project" value="InterPro"/>
</dbReference>
<dbReference type="GO" id="GO:0140664">
    <property type="term" value="F:ATP-dependent DNA damage sensor activity"/>
    <property type="evidence" value="ECO:0007669"/>
    <property type="project" value="InterPro"/>
</dbReference>
<dbReference type="GO" id="GO:0003684">
    <property type="term" value="F:damaged DNA binding"/>
    <property type="evidence" value="ECO:0007669"/>
    <property type="project" value="UniProtKB-UniRule"/>
</dbReference>
<dbReference type="GO" id="GO:0003697">
    <property type="term" value="F:single-stranded DNA binding"/>
    <property type="evidence" value="ECO:0007669"/>
    <property type="project" value="UniProtKB-UniRule"/>
</dbReference>
<dbReference type="GO" id="GO:0006310">
    <property type="term" value="P:DNA recombination"/>
    <property type="evidence" value="ECO:0007669"/>
    <property type="project" value="UniProtKB-UniRule"/>
</dbReference>
<dbReference type="GO" id="GO:0006281">
    <property type="term" value="P:DNA repair"/>
    <property type="evidence" value="ECO:0007669"/>
    <property type="project" value="UniProtKB-UniRule"/>
</dbReference>
<dbReference type="GO" id="GO:0009432">
    <property type="term" value="P:SOS response"/>
    <property type="evidence" value="ECO:0007669"/>
    <property type="project" value="UniProtKB-UniRule"/>
</dbReference>
<dbReference type="CDD" id="cd00983">
    <property type="entry name" value="RecA"/>
    <property type="match status" value="1"/>
</dbReference>
<dbReference type="FunFam" id="3.40.50.300:FF:000087">
    <property type="entry name" value="Recombinase RecA"/>
    <property type="match status" value="1"/>
</dbReference>
<dbReference type="Gene3D" id="3.40.50.300">
    <property type="entry name" value="P-loop containing nucleotide triphosphate hydrolases"/>
    <property type="match status" value="1"/>
</dbReference>
<dbReference type="HAMAP" id="MF_00268">
    <property type="entry name" value="RecA"/>
    <property type="match status" value="1"/>
</dbReference>
<dbReference type="InterPro" id="IPR003593">
    <property type="entry name" value="AAA+_ATPase"/>
</dbReference>
<dbReference type="InterPro" id="IPR013765">
    <property type="entry name" value="DNA_recomb/repair_RecA"/>
</dbReference>
<dbReference type="InterPro" id="IPR020584">
    <property type="entry name" value="DNA_recomb/repair_RecA_CS"/>
</dbReference>
<dbReference type="InterPro" id="IPR027417">
    <property type="entry name" value="P-loop_NTPase"/>
</dbReference>
<dbReference type="InterPro" id="IPR049261">
    <property type="entry name" value="RecA-like_C"/>
</dbReference>
<dbReference type="InterPro" id="IPR049428">
    <property type="entry name" value="RecA-like_N"/>
</dbReference>
<dbReference type="InterPro" id="IPR020588">
    <property type="entry name" value="RecA_ATP-bd"/>
</dbReference>
<dbReference type="InterPro" id="IPR023400">
    <property type="entry name" value="RecA_C_sf"/>
</dbReference>
<dbReference type="InterPro" id="IPR020587">
    <property type="entry name" value="RecA_monomer-monomer_interface"/>
</dbReference>
<dbReference type="NCBIfam" id="TIGR02012">
    <property type="entry name" value="tigrfam_recA"/>
    <property type="match status" value="1"/>
</dbReference>
<dbReference type="PANTHER" id="PTHR45900:SF1">
    <property type="entry name" value="MITOCHONDRIAL DNA REPAIR PROTEIN RECA HOMOLOG-RELATED"/>
    <property type="match status" value="1"/>
</dbReference>
<dbReference type="PANTHER" id="PTHR45900">
    <property type="entry name" value="RECA"/>
    <property type="match status" value="1"/>
</dbReference>
<dbReference type="Pfam" id="PF00154">
    <property type="entry name" value="RecA"/>
    <property type="match status" value="1"/>
</dbReference>
<dbReference type="Pfam" id="PF21096">
    <property type="entry name" value="RecA_C"/>
    <property type="match status" value="1"/>
</dbReference>
<dbReference type="PRINTS" id="PR00142">
    <property type="entry name" value="RECA"/>
</dbReference>
<dbReference type="SMART" id="SM00382">
    <property type="entry name" value="AAA"/>
    <property type="match status" value="1"/>
</dbReference>
<dbReference type="SUPFAM" id="SSF52540">
    <property type="entry name" value="P-loop containing nucleoside triphosphate hydrolases"/>
    <property type="match status" value="1"/>
</dbReference>
<dbReference type="SUPFAM" id="SSF54752">
    <property type="entry name" value="RecA protein, C-terminal domain"/>
    <property type="match status" value="1"/>
</dbReference>
<dbReference type="PROSITE" id="PS00321">
    <property type="entry name" value="RECA_1"/>
    <property type="match status" value="1"/>
</dbReference>
<dbReference type="PROSITE" id="PS50162">
    <property type="entry name" value="RECA_2"/>
    <property type="match status" value="1"/>
</dbReference>
<dbReference type="PROSITE" id="PS50163">
    <property type="entry name" value="RECA_3"/>
    <property type="match status" value="1"/>
</dbReference>
<reference key="1">
    <citation type="journal article" date="2010" name="Genome Biol.">
        <title>Structure and dynamics of the pan-genome of Streptococcus pneumoniae and closely related species.</title>
        <authorList>
            <person name="Donati C."/>
            <person name="Hiller N.L."/>
            <person name="Tettelin H."/>
            <person name="Muzzi A."/>
            <person name="Croucher N.J."/>
            <person name="Angiuoli S.V."/>
            <person name="Oggioni M."/>
            <person name="Dunning Hotopp J.C."/>
            <person name="Hu F.Z."/>
            <person name="Riley D.R."/>
            <person name="Covacci A."/>
            <person name="Mitchell T.J."/>
            <person name="Bentley S.D."/>
            <person name="Kilian M."/>
            <person name="Ehrlich G.D."/>
            <person name="Rappuoli R."/>
            <person name="Moxon E.R."/>
            <person name="Masignani V."/>
        </authorList>
    </citation>
    <scope>NUCLEOTIDE SEQUENCE [LARGE SCALE GENOMIC DNA]</scope>
    <source>
        <strain>Hungary19A-6</strain>
    </source>
</reference>
<accession>B1I8Q1</accession>